<proteinExistence type="inferred from homology"/>
<protein>
    <recommendedName>
        <fullName evidence="1">Glutamate 5-kinase</fullName>
        <ecNumber evidence="1">2.7.2.11</ecNumber>
    </recommendedName>
    <alternativeName>
        <fullName evidence="1">Gamma-glutamyl kinase</fullName>
        <shortName evidence="1">GK</shortName>
    </alternativeName>
</protein>
<reference key="1">
    <citation type="journal article" date="2009" name="Environ. Microbiol.">
        <title>Contribution of mobile genetic elements to Desulfovibrio vulgaris genome plasticity.</title>
        <authorList>
            <person name="Walker C.B."/>
            <person name="Stolyar S."/>
            <person name="Chivian D."/>
            <person name="Pinel N."/>
            <person name="Gabster J.A."/>
            <person name="Dehal P.S."/>
            <person name="He Z."/>
            <person name="Yang Z.K."/>
            <person name="Yen H.C."/>
            <person name="Zhou J."/>
            <person name="Wall J.D."/>
            <person name="Hazen T.C."/>
            <person name="Arkin A.P."/>
            <person name="Stahl D.A."/>
        </authorList>
    </citation>
    <scope>NUCLEOTIDE SEQUENCE [LARGE SCALE GENOMIC DNA]</scope>
    <source>
        <strain>DP4</strain>
    </source>
</reference>
<feature type="chain" id="PRO_1000081054" description="Glutamate 5-kinase">
    <location>
        <begin position="1"/>
        <end position="380"/>
    </location>
</feature>
<feature type="domain" description="PUA" evidence="1">
    <location>
        <begin position="285"/>
        <end position="363"/>
    </location>
</feature>
<feature type="binding site" evidence="1">
    <location>
        <position position="20"/>
    </location>
    <ligand>
        <name>ATP</name>
        <dbReference type="ChEBI" id="CHEBI:30616"/>
    </ligand>
</feature>
<feature type="binding site" evidence="1">
    <location>
        <position position="59"/>
    </location>
    <ligand>
        <name>substrate</name>
    </ligand>
</feature>
<feature type="binding site" evidence="1">
    <location>
        <position position="146"/>
    </location>
    <ligand>
        <name>substrate</name>
    </ligand>
</feature>
<feature type="binding site" evidence="1">
    <location>
        <position position="158"/>
    </location>
    <ligand>
        <name>substrate</name>
    </ligand>
</feature>
<feature type="binding site" evidence="1">
    <location>
        <begin position="220"/>
        <end position="226"/>
    </location>
    <ligand>
        <name>ATP</name>
        <dbReference type="ChEBI" id="CHEBI:30616"/>
    </ligand>
</feature>
<evidence type="ECO:0000255" key="1">
    <source>
        <dbReference type="HAMAP-Rule" id="MF_00456"/>
    </source>
</evidence>
<name>PROB_NITV4</name>
<sequence length="380" mass="40567">MEWTEERAAALREARCVVVKVGSAVLTTETGVNLAVIDSLAAQLSALQESGKRVVLVSSGAVAAGRSALRDCCEIAGMPHKQAASAVGQSRLMHHYDEAFARYGHLSAQVLLTRDDLRNRERFLNARNTFQALLDWGVIPVVNENDTVAVQELKFGDNDCLASLLLNVVEGDLYVNLTSASGVYADNPQTNPEAGILPCIEDVHTLDLDVMCGGKTSVGTGGMYSKLLAASRAAQLGVPTLILPGREPRILERAFSGEPVGTWVRPEARVVSRRKYWLAYQSEPSGTVTVDEGAARALLQQGGSLLPGGVCDVSGAFEPGALVRIAGPDGTVIAVGLSNYGDRDLVRIKGHRRHEVAAILGDAHFPEVVHRDNMLLDAVV</sequence>
<accession>A1VF55</accession>
<keyword id="KW-0028">Amino-acid biosynthesis</keyword>
<keyword id="KW-0067">ATP-binding</keyword>
<keyword id="KW-0963">Cytoplasm</keyword>
<keyword id="KW-0418">Kinase</keyword>
<keyword id="KW-0547">Nucleotide-binding</keyword>
<keyword id="KW-0641">Proline biosynthesis</keyword>
<keyword id="KW-0808">Transferase</keyword>
<comment type="function">
    <text evidence="1">Catalyzes the transfer of a phosphate group to glutamate to form L-glutamate 5-phosphate.</text>
</comment>
<comment type="catalytic activity">
    <reaction evidence="1">
        <text>L-glutamate + ATP = L-glutamyl 5-phosphate + ADP</text>
        <dbReference type="Rhea" id="RHEA:14877"/>
        <dbReference type="ChEBI" id="CHEBI:29985"/>
        <dbReference type="ChEBI" id="CHEBI:30616"/>
        <dbReference type="ChEBI" id="CHEBI:58274"/>
        <dbReference type="ChEBI" id="CHEBI:456216"/>
        <dbReference type="EC" id="2.7.2.11"/>
    </reaction>
</comment>
<comment type="pathway">
    <text evidence="1">Amino-acid biosynthesis; L-proline biosynthesis; L-glutamate 5-semialdehyde from L-glutamate: step 1/2.</text>
</comment>
<comment type="subcellular location">
    <subcellularLocation>
        <location evidence="1">Cytoplasm</location>
    </subcellularLocation>
</comment>
<comment type="similarity">
    <text evidence="1">Belongs to the glutamate 5-kinase family.</text>
</comment>
<gene>
    <name evidence="1" type="primary">proB</name>
    <name type="ordered locus">Dvul_2055</name>
</gene>
<dbReference type="EC" id="2.7.2.11" evidence="1"/>
<dbReference type="EMBL" id="CP000527">
    <property type="protein sequence ID" value="ABM29071.1"/>
    <property type="molecule type" value="Genomic_DNA"/>
</dbReference>
<dbReference type="RefSeq" id="WP_010938229.1">
    <property type="nucleotide sequence ID" value="NC_008751.1"/>
</dbReference>
<dbReference type="SMR" id="A1VF55"/>
<dbReference type="KEGG" id="dvl:Dvul_2055"/>
<dbReference type="HOGENOM" id="CLU_025400_2_0_7"/>
<dbReference type="UniPathway" id="UPA00098">
    <property type="reaction ID" value="UER00359"/>
</dbReference>
<dbReference type="Proteomes" id="UP000009173">
    <property type="component" value="Chromosome"/>
</dbReference>
<dbReference type="GO" id="GO:0005829">
    <property type="term" value="C:cytosol"/>
    <property type="evidence" value="ECO:0007669"/>
    <property type="project" value="TreeGrafter"/>
</dbReference>
<dbReference type="GO" id="GO:0005524">
    <property type="term" value="F:ATP binding"/>
    <property type="evidence" value="ECO:0007669"/>
    <property type="project" value="UniProtKB-KW"/>
</dbReference>
<dbReference type="GO" id="GO:0004349">
    <property type="term" value="F:glutamate 5-kinase activity"/>
    <property type="evidence" value="ECO:0007669"/>
    <property type="project" value="UniProtKB-UniRule"/>
</dbReference>
<dbReference type="GO" id="GO:0003723">
    <property type="term" value="F:RNA binding"/>
    <property type="evidence" value="ECO:0007669"/>
    <property type="project" value="InterPro"/>
</dbReference>
<dbReference type="GO" id="GO:0055129">
    <property type="term" value="P:L-proline biosynthetic process"/>
    <property type="evidence" value="ECO:0007669"/>
    <property type="project" value="UniProtKB-UniRule"/>
</dbReference>
<dbReference type="CDD" id="cd04242">
    <property type="entry name" value="AAK_G5K_ProB"/>
    <property type="match status" value="1"/>
</dbReference>
<dbReference type="CDD" id="cd21157">
    <property type="entry name" value="PUA_G5K"/>
    <property type="match status" value="1"/>
</dbReference>
<dbReference type="FunFam" id="3.40.1160.10:FF:000006">
    <property type="entry name" value="Glutamate 5-kinase"/>
    <property type="match status" value="1"/>
</dbReference>
<dbReference type="Gene3D" id="3.40.1160.10">
    <property type="entry name" value="Acetylglutamate kinase-like"/>
    <property type="match status" value="2"/>
</dbReference>
<dbReference type="Gene3D" id="2.30.130.10">
    <property type="entry name" value="PUA domain"/>
    <property type="match status" value="1"/>
</dbReference>
<dbReference type="HAMAP" id="MF_00456">
    <property type="entry name" value="ProB"/>
    <property type="match status" value="1"/>
</dbReference>
<dbReference type="InterPro" id="IPR036393">
    <property type="entry name" value="AceGlu_kinase-like_sf"/>
</dbReference>
<dbReference type="InterPro" id="IPR001048">
    <property type="entry name" value="Asp/Glu/Uridylate_kinase"/>
</dbReference>
<dbReference type="InterPro" id="IPR041739">
    <property type="entry name" value="G5K_ProB"/>
</dbReference>
<dbReference type="InterPro" id="IPR001057">
    <property type="entry name" value="Glu/AcGlu_kinase"/>
</dbReference>
<dbReference type="InterPro" id="IPR011529">
    <property type="entry name" value="Glu_5kinase"/>
</dbReference>
<dbReference type="InterPro" id="IPR005715">
    <property type="entry name" value="Glu_5kinase/COase_Synthase"/>
</dbReference>
<dbReference type="InterPro" id="IPR019797">
    <property type="entry name" value="Glutamate_5-kinase_CS"/>
</dbReference>
<dbReference type="InterPro" id="IPR002478">
    <property type="entry name" value="PUA"/>
</dbReference>
<dbReference type="InterPro" id="IPR015947">
    <property type="entry name" value="PUA-like_sf"/>
</dbReference>
<dbReference type="InterPro" id="IPR036974">
    <property type="entry name" value="PUA_sf"/>
</dbReference>
<dbReference type="NCBIfam" id="TIGR01027">
    <property type="entry name" value="proB"/>
    <property type="match status" value="1"/>
</dbReference>
<dbReference type="PANTHER" id="PTHR43654">
    <property type="entry name" value="GLUTAMATE 5-KINASE"/>
    <property type="match status" value="1"/>
</dbReference>
<dbReference type="PANTHER" id="PTHR43654:SF1">
    <property type="entry name" value="ISOPENTENYL PHOSPHATE KINASE"/>
    <property type="match status" value="1"/>
</dbReference>
<dbReference type="Pfam" id="PF00696">
    <property type="entry name" value="AA_kinase"/>
    <property type="match status" value="1"/>
</dbReference>
<dbReference type="Pfam" id="PF01472">
    <property type="entry name" value="PUA"/>
    <property type="match status" value="1"/>
</dbReference>
<dbReference type="PIRSF" id="PIRSF000729">
    <property type="entry name" value="GK"/>
    <property type="match status" value="1"/>
</dbReference>
<dbReference type="PRINTS" id="PR00474">
    <property type="entry name" value="GLU5KINASE"/>
</dbReference>
<dbReference type="SMART" id="SM00359">
    <property type="entry name" value="PUA"/>
    <property type="match status" value="1"/>
</dbReference>
<dbReference type="SUPFAM" id="SSF53633">
    <property type="entry name" value="Carbamate kinase-like"/>
    <property type="match status" value="1"/>
</dbReference>
<dbReference type="SUPFAM" id="SSF88697">
    <property type="entry name" value="PUA domain-like"/>
    <property type="match status" value="1"/>
</dbReference>
<dbReference type="PROSITE" id="PS00902">
    <property type="entry name" value="GLUTAMATE_5_KINASE"/>
    <property type="match status" value="1"/>
</dbReference>
<dbReference type="PROSITE" id="PS50890">
    <property type="entry name" value="PUA"/>
    <property type="match status" value="1"/>
</dbReference>
<organism>
    <name type="scientific">Nitratidesulfovibrio vulgaris (strain DP4)</name>
    <name type="common">Desulfovibrio vulgaris</name>
    <dbReference type="NCBI Taxonomy" id="391774"/>
    <lineage>
        <taxon>Bacteria</taxon>
        <taxon>Pseudomonadati</taxon>
        <taxon>Thermodesulfobacteriota</taxon>
        <taxon>Desulfovibrionia</taxon>
        <taxon>Desulfovibrionales</taxon>
        <taxon>Desulfovibrionaceae</taxon>
        <taxon>Nitratidesulfovibrio</taxon>
    </lineage>
</organism>